<reference key="1">
    <citation type="journal article" date="2000" name="Nature">
        <title>The complete sequence of the mucosal pathogen Ureaplasma urealyticum.</title>
        <authorList>
            <person name="Glass J.I."/>
            <person name="Lefkowitz E.J."/>
            <person name="Glass J.S."/>
            <person name="Heiner C.R."/>
            <person name="Chen E.Y."/>
            <person name="Cassell G.H."/>
        </authorList>
    </citation>
    <scope>NUCLEOTIDE SEQUENCE [LARGE SCALE GENOMIC DNA]</scope>
    <source>
        <strain>ATCC 700970</strain>
    </source>
</reference>
<protein>
    <recommendedName>
        <fullName evidence="1">Probable tRNA sulfurtransferase</fullName>
        <ecNumber evidence="1">2.8.1.4</ecNumber>
    </recommendedName>
    <alternativeName>
        <fullName evidence="1">Sulfur carrier protein ThiS sulfurtransferase</fullName>
    </alternativeName>
    <alternativeName>
        <fullName evidence="1">Thiamine biosynthesis protein ThiI</fullName>
    </alternativeName>
    <alternativeName>
        <fullName evidence="1">tRNA 4-thiouridine synthase</fullName>
    </alternativeName>
</protein>
<feature type="chain" id="PRO_0000154883" description="Probable tRNA sulfurtransferase">
    <location>
        <begin position="1"/>
        <end position="390"/>
    </location>
</feature>
<feature type="domain" description="THUMP" evidence="1">
    <location>
        <begin position="60"/>
        <end position="162"/>
    </location>
</feature>
<feature type="binding site" evidence="1">
    <location>
        <begin position="180"/>
        <end position="181"/>
    </location>
    <ligand>
        <name>ATP</name>
        <dbReference type="ChEBI" id="CHEBI:30616"/>
    </ligand>
</feature>
<feature type="binding site" evidence="1">
    <location>
        <begin position="205"/>
        <end position="206"/>
    </location>
    <ligand>
        <name>ATP</name>
        <dbReference type="ChEBI" id="CHEBI:30616"/>
    </ligand>
</feature>
<feature type="binding site" evidence="1">
    <location>
        <position position="264"/>
    </location>
    <ligand>
        <name>ATP</name>
        <dbReference type="ChEBI" id="CHEBI:30616"/>
    </ligand>
</feature>
<feature type="binding site" evidence="1">
    <location>
        <position position="286"/>
    </location>
    <ligand>
        <name>ATP</name>
        <dbReference type="ChEBI" id="CHEBI:30616"/>
    </ligand>
</feature>
<feature type="binding site" evidence="1">
    <location>
        <position position="295"/>
    </location>
    <ligand>
        <name>ATP</name>
        <dbReference type="ChEBI" id="CHEBI:30616"/>
    </ligand>
</feature>
<evidence type="ECO:0000255" key="1">
    <source>
        <dbReference type="HAMAP-Rule" id="MF_00021"/>
    </source>
</evidence>
<name>THII_UREPA</name>
<proteinExistence type="inferred from homology"/>
<gene>
    <name evidence="1" type="primary">thiI</name>
    <name type="ordered locus">UU418</name>
</gene>
<keyword id="KW-0067">ATP-binding</keyword>
<keyword id="KW-0963">Cytoplasm</keyword>
<keyword id="KW-0547">Nucleotide-binding</keyword>
<keyword id="KW-1185">Reference proteome</keyword>
<keyword id="KW-0694">RNA-binding</keyword>
<keyword id="KW-0784">Thiamine biosynthesis</keyword>
<keyword id="KW-0808">Transferase</keyword>
<keyword id="KW-0820">tRNA-binding</keyword>
<dbReference type="EC" id="2.8.1.4" evidence="1"/>
<dbReference type="EMBL" id="AF222894">
    <property type="protein sequence ID" value="AAF30829.1"/>
    <property type="molecule type" value="Genomic_DNA"/>
</dbReference>
<dbReference type="RefSeq" id="WP_006689025.1">
    <property type="nucleotide sequence ID" value="NC_002162.1"/>
</dbReference>
<dbReference type="SMR" id="Q9PQ71"/>
<dbReference type="STRING" id="273119.UU418"/>
<dbReference type="EnsemblBacteria" id="AAF30829">
    <property type="protein sequence ID" value="AAF30829"/>
    <property type="gene ID" value="UU418"/>
</dbReference>
<dbReference type="GeneID" id="29672603"/>
<dbReference type="KEGG" id="uur:UU418"/>
<dbReference type="eggNOG" id="COG0301">
    <property type="taxonomic scope" value="Bacteria"/>
</dbReference>
<dbReference type="HOGENOM" id="CLU_037952_4_0_14"/>
<dbReference type="OrthoDB" id="9773948at2"/>
<dbReference type="UniPathway" id="UPA00060"/>
<dbReference type="Proteomes" id="UP000000423">
    <property type="component" value="Chromosome"/>
</dbReference>
<dbReference type="GO" id="GO:0005829">
    <property type="term" value="C:cytosol"/>
    <property type="evidence" value="ECO:0007669"/>
    <property type="project" value="TreeGrafter"/>
</dbReference>
<dbReference type="GO" id="GO:0005524">
    <property type="term" value="F:ATP binding"/>
    <property type="evidence" value="ECO:0007669"/>
    <property type="project" value="UniProtKB-UniRule"/>
</dbReference>
<dbReference type="GO" id="GO:0004810">
    <property type="term" value="F:CCA tRNA nucleotidyltransferase activity"/>
    <property type="evidence" value="ECO:0007669"/>
    <property type="project" value="InterPro"/>
</dbReference>
<dbReference type="GO" id="GO:0000049">
    <property type="term" value="F:tRNA binding"/>
    <property type="evidence" value="ECO:0007669"/>
    <property type="project" value="UniProtKB-UniRule"/>
</dbReference>
<dbReference type="GO" id="GO:0140741">
    <property type="term" value="F:tRNA-uracil-4 sulfurtransferase activity"/>
    <property type="evidence" value="ECO:0007669"/>
    <property type="project" value="UniProtKB-EC"/>
</dbReference>
<dbReference type="GO" id="GO:0009228">
    <property type="term" value="P:thiamine biosynthetic process"/>
    <property type="evidence" value="ECO:0007669"/>
    <property type="project" value="UniProtKB-KW"/>
</dbReference>
<dbReference type="GO" id="GO:0009229">
    <property type="term" value="P:thiamine diphosphate biosynthetic process"/>
    <property type="evidence" value="ECO:0007669"/>
    <property type="project" value="UniProtKB-UniRule"/>
</dbReference>
<dbReference type="GO" id="GO:0052837">
    <property type="term" value="P:thiazole biosynthetic process"/>
    <property type="evidence" value="ECO:0007669"/>
    <property type="project" value="TreeGrafter"/>
</dbReference>
<dbReference type="GO" id="GO:0002937">
    <property type="term" value="P:tRNA 4-thiouridine biosynthesis"/>
    <property type="evidence" value="ECO:0007669"/>
    <property type="project" value="TreeGrafter"/>
</dbReference>
<dbReference type="CDD" id="cd01712">
    <property type="entry name" value="PPase_ThiI"/>
    <property type="match status" value="1"/>
</dbReference>
<dbReference type="CDD" id="cd11716">
    <property type="entry name" value="THUMP_ThiI"/>
    <property type="match status" value="1"/>
</dbReference>
<dbReference type="FunFam" id="3.40.50.620:FF:000053">
    <property type="entry name" value="Probable tRNA sulfurtransferase"/>
    <property type="match status" value="1"/>
</dbReference>
<dbReference type="Gene3D" id="3.30.2130.30">
    <property type="match status" value="1"/>
</dbReference>
<dbReference type="Gene3D" id="3.40.50.620">
    <property type="entry name" value="HUPs"/>
    <property type="match status" value="1"/>
</dbReference>
<dbReference type="HAMAP" id="MF_00021">
    <property type="entry name" value="ThiI"/>
    <property type="match status" value="1"/>
</dbReference>
<dbReference type="InterPro" id="IPR014729">
    <property type="entry name" value="Rossmann-like_a/b/a_fold"/>
</dbReference>
<dbReference type="InterPro" id="IPR020536">
    <property type="entry name" value="ThiI_AANH"/>
</dbReference>
<dbReference type="InterPro" id="IPR054173">
    <property type="entry name" value="ThiI_fer"/>
</dbReference>
<dbReference type="InterPro" id="IPR049961">
    <property type="entry name" value="ThiI_N"/>
</dbReference>
<dbReference type="InterPro" id="IPR004114">
    <property type="entry name" value="THUMP_dom"/>
</dbReference>
<dbReference type="InterPro" id="IPR049962">
    <property type="entry name" value="THUMP_ThiI"/>
</dbReference>
<dbReference type="InterPro" id="IPR003720">
    <property type="entry name" value="tRNA_STrfase"/>
</dbReference>
<dbReference type="InterPro" id="IPR050102">
    <property type="entry name" value="tRNA_sulfurtransferase_ThiI"/>
</dbReference>
<dbReference type="NCBIfam" id="TIGR00342">
    <property type="entry name" value="tRNA uracil 4-sulfurtransferase ThiI"/>
    <property type="match status" value="1"/>
</dbReference>
<dbReference type="PANTHER" id="PTHR43209">
    <property type="entry name" value="TRNA SULFURTRANSFERASE"/>
    <property type="match status" value="1"/>
</dbReference>
<dbReference type="PANTHER" id="PTHR43209:SF1">
    <property type="entry name" value="TRNA SULFURTRANSFERASE"/>
    <property type="match status" value="1"/>
</dbReference>
<dbReference type="Pfam" id="PF02568">
    <property type="entry name" value="ThiI"/>
    <property type="match status" value="1"/>
</dbReference>
<dbReference type="Pfam" id="PF22025">
    <property type="entry name" value="ThiI_fer"/>
    <property type="match status" value="1"/>
</dbReference>
<dbReference type="Pfam" id="PF02926">
    <property type="entry name" value="THUMP"/>
    <property type="match status" value="1"/>
</dbReference>
<dbReference type="SMART" id="SM00981">
    <property type="entry name" value="THUMP"/>
    <property type="match status" value="1"/>
</dbReference>
<dbReference type="SUPFAM" id="SSF52402">
    <property type="entry name" value="Adenine nucleotide alpha hydrolases-like"/>
    <property type="match status" value="1"/>
</dbReference>
<dbReference type="SUPFAM" id="SSF143437">
    <property type="entry name" value="THUMP domain-like"/>
    <property type="match status" value="1"/>
</dbReference>
<dbReference type="PROSITE" id="PS51165">
    <property type="entry name" value="THUMP"/>
    <property type="match status" value="1"/>
</dbReference>
<sequence>MKPIIYIKYGELTLKGKNRTQFIKVLVHNIKQILIQYQNLTYCVGYDNLKIINLENYNLKQIIDDLKEVYGIAFICIAYQVDKELSEIQLACKEFINDYEQTFKIEARRSDKSFKYNSMEIKQMCAAYLLQNSPLLKVDVHRPQLLINIEIKYDCAIVYGHKIMGAKGLPVGINGKALVLLSGGIDSPVASRLIMKRGISIDFITFITPPHTSQKALDKTIALAKQITLDNKLTKANLYVCNFTKLQDEIAHISKESYRITLMRRYFMRIAKRLAISVKANALVTGEALGQVASQTLNSMQTISSVLDNFLVLRPLIAYDKEEIISLAKRFNTYELSILPYDDSCSLFAPKNPTTNPNVQTAAKLEEESLVLDAIYELVYTKEITKINLS</sequence>
<accession>Q9PQ71</accession>
<organism>
    <name type="scientific">Ureaplasma parvum serovar 3 (strain ATCC 700970)</name>
    <dbReference type="NCBI Taxonomy" id="273119"/>
    <lineage>
        <taxon>Bacteria</taxon>
        <taxon>Bacillati</taxon>
        <taxon>Mycoplasmatota</taxon>
        <taxon>Mycoplasmoidales</taxon>
        <taxon>Mycoplasmoidaceae</taxon>
        <taxon>Ureaplasma</taxon>
    </lineage>
</organism>
<comment type="function">
    <text evidence="1">Catalyzes the ATP-dependent transfer of a sulfur to tRNA to produce 4-thiouridine in position 8 of tRNAs, which functions as a near-UV photosensor. Also catalyzes the transfer of sulfur to the sulfur carrier protein ThiS, forming ThiS-thiocarboxylate. This is a step in the synthesis of thiazole, in the thiamine biosynthesis pathway. The sulfur is donated as persulfide by IscS.</text>
</comment>
<comment type="catalytic activity">
    <reaction evidence="1">
        <text>[ThiI sulfur-carrier protein]-S-sulfanyl-L-cysteine + a uridine in tRNA + 2 reduced [2Fe-2S]-[ferredoxin] + ATP + H(+) = [ThiI sulfur-carrier protein]-L-cysteine + a 4-thiouridine in tRNA + 2 oxidized [2Fe-2S]-[ferredoxin] + AMP + diphosphate</text>
        <dbReference type="Rhea" id="RHEA:24176"/>
        <dbReference type="Rhea" id="RHEA-COMP:10000"/>
        <dbReference type="Rhea" id="RHEA-COMP:10001"/>
        <dbReference type="Rhea" id="RHEA-COMP:13337"/>
        <dbReference type="Rhea" id="RHEA-COMP:13338"/>
        <dbReference type="Rhea" id="RHEA-COMP:13339"/>
        <dbReference type="Rhea" id="RHEA-COMP:13340"/>
        <dbReference type="ChEBI" id="CHEBI:15378"/>
        <dbReference type="ChEBI" id="CHEBI:29950"/>
        <dbReference type="ChEBI" id="CHEBI:30616"/>
        <dbReference type="ChEBI" id="CHEBI:33019"/>
        <dbReference type="ChEBI" id="CHEBI:33737"/>
        <dbReference type="ChEBI" id="CHEBI:33738"/>
        <dbReference type="ChEBI" id="CHEBI:61963"/>
        <dbReference type="ChEBI" id="CHEBI:65315"/>
        <dbReference type="ChEBI" id="CHEBI:136798"/>
        <dbReference type="ChEBI" id="CHEBI:456215"/>
        <dbReference type="EC" id="2.8.1.4"/>
    </reaction>
</comment>
<comment type="catalytic activity">
    <reaction evidence="1">
        <text>[ThiS sulfur-carrier protein]-C-terminal Gly-Gly-AMP + S-sulfanyl-L-cysteinyl-[cysteine desulfurase] + AH2 = [ThiS sulfur-carrier protein]-C-terminal-Gly-aminoethanethioate + L-cysteinyl-[cysteine desulfurase] + A + AMP + 2 H(+)</text>
        <dbReference type="Rhea" id="RHEA:43340"/>
        <dbReference type="Rhea" id="RHEA-COMP:12157"/>
        <dbReference type="Rhea" id="RHEA-COMP:12158"/>
        <dbReference type="Rhea" id="RHEA-COMP:12910"/>
        <dbReference type="Rhea" id="RHEA-COMP:19908"/>
        <dbReference type="ChEBI" id="CHEBI:13193"/>
        <dbReference type="ChEBI" id="CHEBI:15378"/>
        <dbReference type="ChEBI" id="CHEBI:17499"/>
        <dbReference type="ChEBI" id="CHEBI:29950"/>
        <dbReference type="ChEBI" id="CHEBI:61963"/>
        <dbReference type="ChEBI" id="CHEBI:90618"/>
        <dbReference type="ChEBI" id="CHEBI:232372"/>
        <dbReference type="ChEBI" id="CHEBI:456215"/>
    </reaction>
</comment>
<comment type="pathway">
    <text evidence="1">Cofactor biosynthesis; thiamine diphosphate biosynthesis.</text>
</comment>
<comment type="subcellular location">
    <subcellularLocation>
        <location evidence="1">Cytoplasm</location>
    </subcellularLocation>
</comment>
<comment type="similarity">
    <text evidence="1">Belongs to the ThiI family.</text>
</comment>